<dbReference type="EC" id="2.6.1.9" evidence="1"/>
<dbReference type="EMBL" id="AE017194">
    <property type="protein sequence ID" value="AAS40574.1"/>
    <property type="molecule type" value="Genomic_DNA"/>
</dbReference>
<dbReference type="SMR" id="Q73AX7"/>
<dbReference type="KEGG" id="bca:BCE_1645"/>
<dbReference type="HOGENOM" id="CLU_017584_3_3_9"/>
<dbReference type="UniPathway" id="UPA00031">
    <property type="reaction ID" value="UER00012"/>
</dbReference>
<dbReference type="Proteomes" id="UP000002527">
    <property type="component" value="Chromosome"/>
</dbReference>
<dbReference type="GO" id="GO:0004400">
    <property type="term" value="F:histidinol-phosphate transaminase activity"/>
    <property type="evidence" value="ECO:0007669"/>
    <property type="project" value="UniProtKB-UniRule"/>
</dbReference>
<dbReference type="GO" id="GO:0030170">
    <property type="term" value="F:pyridoxal phosphate binding"/>
    <property type="evidence" value="ECO:0007669"/>
    <property type="project" value="InterPro"/>
</dbReference>
<dbReference type="GO" id="GO:0000105">
    <property type="term" value="P:L-histidine biosynthetic process"/>
    <property type="evidence" value="ECO:0007669"/>
    <property type="project" value="UniProtKB-UniRule"/>
</dbReference>
<dbReference type="CDD" id="cd00609">
    <property type="entry name" value="AAT_like"/>
    <property type="match status" value="1"/>
</dbReference>
<dbReference type="Gene3D" id="3.90.1150.10">
    <property type="entry name" value="Aspartate Aminotransferase, domain 1"/>
    <property type="match status" value="1"/>
</dbReference>
<dbReference type="Gene3D" id="3.40.640.10">
    <property type="entry name" value="Type I PLP-dependent aspartate aminotransferase-like (Major domain)"/>
    <property type="match status" value="1"/>
</dbReference>
<dbReference type="HAMAP" id="MF_01023">
    <property type="entry name" value="HisC_aminotrans_2"/>
    <property type="match status" value="1"/>
</dbReference>
<dbReference type="InterPro" id="IPR001917">
    <property type="entry name" value="Aminotrans_II_pyridoxalP_BS"/>
</dbReference>
<dbReference type="InterPro" id="IPR004839">
    <property type="entry name" value="Aminotransferase_I/II_large"/>
</dbReference>
<dbReference type="InterPro" id="IPR005861">
    <property type="entry name" value="HisP_aminotrans"/>
</dbReference>
<dbReference type="InterPro" id="IPR050106">
    <property type="entry name" value="HistidinolP_aminotransfase"/>
</dbReference>
<dbReference type="InterPro" id="IPR015424">
    <property type="entry name" value="PyrdxlP-dep_Trfase"/>
</dbReference>
<dbReference type="InterPro" id="IPR015421">
    <property type="entry name" value="PyrdxlP-dep_Trfase_major"/>
</dbReference>
<dbReference type="InterPro" id="IPR015422">
    <property type="entry name" value="PyrdxlP-dep_Trfase_small"/>
</dbReference>
<dbReference type="NCBIfam" id="TIGR01141">
    <property type="entry name" value="hisC"/>
    <property type="match status" value="1"/>
</dbReference>
<dbReference type="PANTHER" id="PTHR43643:SF3">
    <property type="entry name" value="HISTIDINOL-PHOSPHATE AMINOTRANSFERASE"/>
    <property type="match status" value="1"/>
</dbReference>
<dbReference type="PANTHER" id="PTHR43643">
    <property type="entry name" value="HISTIDINOL-PHOSPHATE AMINOTRANSFERASE 2"/>
    <property type="match status" value="1"/>
</dbReference>
<dbReference type="Pfam" id="PF00155">
    <property type="entry name" value="Aminotran_1_2"/>
    <property type="match status" value="1"/>
</dbReference>
<dbReference type="SUPFAM" id="SSF53383">
    <property type="entry name" value="PLP-dependent transferases"/>
    <property type="match status" value="1"/>
</dbReference>
<dbReference type="PROSITE" id="PS00599">
    <property type="entry name" value="AA_TRANSFER_CLASS_2"/>
    <property type="match status" value="1"/>
</dbReference>
<evidence type="ECO:0000255" key="1">
    <source>
        <dbReference type="HAMAP-Rule" id="MF_01023"/>
    </source>
</evidence>
<reference key="1">
    <citation type="journal article" date="2004" name="Nucleic Acids Res.">
        <title>The genome sequence of Bacillus cereus ATCC 10987 reveals metabolic adaptations and a large plasmid related to Bacillus anthracis pXO1.</title>
        <authorList>
            <person name="Rasko D.A."/>
            <person name="Ravel J."/>
            <person name="Oekstad O.A."/>
            <person name="Helgason E."/>
            <person name="Cer R.Z."/>
            <person name="Jiang L."/>
            <person name="Shores K.A."/>
            <person name="Fouts D.E."/>
            <person name="Tourasse N.J."/>
            <person name="Angiuoli S.V."/>
            <person name="Kolonay J.F."/>
            <person name="Nelson W.C."/>
            <person name="Kolstoe A.-B."/>
            <person name="Fraser C.M."/>
            <person name="Read T.D."/>
        </authorList>
    </citation>
    <scope>NUCLEOTIDE SEQUENCE [LARGE SCALE GENOMIC DNA]</scope>
    <source>
        <strain>ATCC 10987 / NRS 248</strain>
    </source>
</reference>
<feature type="chain" id="PRO_0000153299" description="Histidinol-phosphate aminotransferase 1">
    <location>
        <begin position="1"/>
        <end position="370"/>
    </location>
</feature>
<feature type="modified residue" description="N6-(pyridoxal phosphate)lysine" evidence="1">
    <location>
        <position position="222"/>
    </location>
</feature>
<sequence length="370" mass="41631">MRVKEQLLTLRAYVPGKNIEEVKREYGLSKIVKLASNENPFGCSARVTEALTSLASQYALYPDGYAFELRTKVAEHLGVKAEQLLFGSGLDEVIQMISRALLHEGTNVVMANPTFSQYHHHAVIEGAKVREVPLKDGIHDLDAMLEQVDDKTKIVWICNPNNPTGTYVEKQKLLSFLESVPKSALVIMDEAYYEYAGAEDYPQTLPLLEKYGNLMILRTFSKAYGLAAFRIGYAVGNEQLIGQLEVARLPFNTSTVAQSVALAALEDQAFLQECVKKNEEGLHQYYAFCKEYNVFYYPSQTNFIFLKLGIPGNEAFERLMKKGYIVRSGAAFGIHDGIRITVGLKEENDEIIELLKELVNEQVKKEETYS</sequence>
<protein>
    <recommendedName>
        <fullName evidence="1">Histidinol-phosphate aminotransferase 1</fullName>
        <ecNumber evidence="1">2.6.1.9</ecNumber>
    </recommendedName>
    <alternativeName>
        <fullName evidence="1">Imidazole acetol-phosphate transaminase 1</fullName>
    </alternativeName>
</protein>
<accession>Q73AX7</accession>
<name>HIS81_BACC1</name>
<keyword id="KW-0028">Amino-acid biosynthesis</keyword>
<keyword id="KW-0032">Aminotransferase</keyword>
<keyword id="KW-0368">Histidine biosynthesis</keyword>
<keyword id="KW-0663">Pyridoxal phosphate</keyword>
<keyword id="KW-0808">Transferase</keyword>
<gene>
    <name evidence="1" type="primary">hisC1</name>
    <name type="ordered locus">BCE_1645</name>
</gene>
<organism>
    <name type="scientific">Bacillus cereus (strain ATCC 10987 / NRS 248)</name>
    <dbReference type="NCBI Taxonomy" id="222523"/>
    <lineage>
        <taxon>Bacteria</taxon>
        <taxon>Bacillati</taxon>
        <taxon>Bacillota</taxon>
        <taxon>Bacilli</taxon>
        <taxon>Bacillales</taxon>
        <taxon>Bacillaceae</taxon>
        <taxon>Bacillus</taxon>
        <taxon>Bacillus cereus group</taxon>
    </lineage>
</organism>
<proteinExistence type="inferred from homology"/>
<comment type="catalytic activity">
    <reaction evidence="1">
        <text>L-histidinol phosphate + 2-oxoglutarate = 3-(imidazol-4-yl)-2-oxopropyl phosphate + L-glutamate</text>
        <dbReference type="Rhea" id="RHEA:23744"/>
        <dbReference type="ChEBI" id="CHEBI:16810"/>
        <dbReference type="ChEBI" id="CHEBI:29985"/>
        <dbReference type="ChEBI" id="CHEBI:57766"/>
        <dbReference type="ChEBI" id="CHEBI:57980"/>
        <dbReference type="EC" id="2.6.1.9"/>
    </reaction>
</comment>
<comment type="cofactor">
    <cofactor evidence="1">
        <name>pyridoxal 5'-phosphate</name>
        <dbReference type="ChEBI" id="CHEBI:597326"/>
    </cofactor>
</comment>
<comment type="pathway">
    <text evidence="1">Amino-acid biosynthesis; L-histidine biosynthesis; L-histidine from 5-phospho-alpha-D-ribose 1-diphosphate: step 7/9.</text>
</comment>
<comment type="subunit">
    <text evidence="1">Homodimer.</text>
</comment>
<comment type="similarity">
    <text evidence="1">Belongs to the class-II pyridoxal-phosphate-dependent aminotransferase family. Histidinol-phosphate aminotransferase subfamily.</text>
</comment>